<dbReference type="EMBL" id="U15303">
    <property type="protein sequence ID" value="AAA50455.1"/>
    <property type="molecule type" value="mRNA"/>
</dbReference>
<dbReference type="PIR" id="T08044">
    <property type="entry name" value="T08044"/>
</dbReference>
<dbReference type="PDB" id="6L4P">
    <property type="method" value="X-ray"/>
    <property type="resolution" value="1.70 A"/>
    <property type="chains" value="B=3125-3268"/>
</dbReference>
<dbReference type="PDB" id="7KZM">
    <property type="method" value="EM"/>
    <property type="resolution" value="7.50 A"/>
    <property type="chains" value="C=1-4485"/>
</dbReference>
<dbReference type="PDB" id="7KZN">
    <property type="method" value="EM"/>
    <property type="resolution" value="4.00 A"/>
    <property type="chains" value="C=1-4485"/>
</dbReference>
<dbReference type="PDB" id="7KZO">
    <property type="method" value="EM"/>
    <property type="resolution" value="3.30 A"/>
    <property type="chains" value="C=1-4485"/>
</dbReference>
<dbReference type="PDB" id="8GLV">
    <property type="method" value="EM"/>
    <property type="resolution" value="3.10 A"/>
    <property type="chains" value="AD/AX/Fa/Ks/Lo=1-4485"/>
</dbReference>
<dbReference type="PDBsum" id="6L4P"/>
<dbReference type="PDBsum" id="7KZM"/>
<dbReference type="PDBsum" id="7KZN"/>
<dbReference type="PDBsum" id="7KZO"/>
<dbReference type="PDBsum" id="8GLV"/>
<dbReference type="EMDB" id="EMD-23082"/>
<dbReference type="EMDB" id="EMD-23083"/>
<dbReference type="EMDB" id="EMD-23084"/>
<dbReference type="EMDB" id="EMD-40220"/>
<dbReference type="SMR" id="Q39575"/>
<dbReference type="IntAct" id="Q39575">
    <property type="interactions" value="2"/>
</dbReference>
<dbReference type="eggNOG" id="KOG3595">
    <property type="taxonomic scope" value="Eukaryota"/>
</dbReference>
<dbReference type="GO" id="GO:0005737">
    <property type="term" value="C:cytoplasm"/>
    <property type="evidence" value="ECO:0007669"/>
    <property type="project" value="UniProtKB-KW"/>
</dbReference>
<dbReference type="GO" id="GO:0030286">
    <property type="term" value="C:dynein complex"/>
    <property type="evidence" value="ECO:0007669"/>
    <property type="project" value="UniProtKB-KW"/>
</dbReference>
<dbReference type="GO" id="GO:0005874">
    <property type="term" value="C:microtubule"/>
    <property type="evidence" value="ECO:0007669"/>
    <property type="project" value="UniProtKB-KW"/>
</dbReference>
<dbReference type="GO" id="GO:0031514">
    <property type="term" value="C:motile cilium"/>
    <property type="evidence" value="ECO:0007669"/>
    <property type="project" value="UniProtKB-SubCell"/>
</dbReference>
<dbReference type="GO" id="GO:0005524">
    <property type="term" value="F:ATP binding"/>
    <property type="evidence" value="ECO:0007669"/>
    <property type="project" value="UniProtKB-KW"/>
</dbReference>
<dbReference type="GO" id="GO:0016887">
    <property type="term" value="F:ATP hydrolysis activity"/>
    <property type="evidence" value="ECO:0007669"/>
    <property type="project" value="InterPro"/>
</dbReference>
<dbReference type="GO" id="GO:0045505">
    <property type="term" value="F:dynein intermediate chain binding"/>
    <property type="evidence" value="ECO:0007669"/>
    <property type="project" value="InterPro"/>
</dbReference>
<dbReference type="GO" id="GO:0051959">
    <property type="term" value="F:dynein light intermediate chain binding"/>
    <property type="evidence" value="ECO:0007669"/>
    <property type="project" value="InterPro"/>
</dbReference>
<dbReference type="GO" id="GO:0008569">
    <property type="term" value="F:minus-end-directed microtubule motor activity"/>
    <property type="evidence" value="ECO:0007669"/>
    <property type="project" value="InterPro"/>
</dbReference>
<dbReference type="GO" id="GO:0060294">
    <property type="term" value="P:cilium movement involved in cell motility"/>
    <property type="evidence" value="ECO:0000315"/>
    <property type="project" value="GO_Central"/>
</dbReference>
<dbReference type="GO" id="GO:0036158">
    <property type="term" value="P:outer dynein arm assembly"/>
    <property type="evidence" value="ECO:0000315"/>
    <property type="project" value="GO_Central"/>
</dbReference>
<dbReference type="FunFam" id="1.10.8.1220:FF:000001">
    <property type="entry name" value="Dynein axonemal heavy chain 5"/>
    <property type="match status" value="1"/>
</dbReference>
<dbReference type="FunFam" id="1.10.8.710:FF:000003">
    <property type="entry name" value="Dynein axonemal heavy chain 5"/>
    <property type="match status" value="1"/>
</dbReference>
<dbReference type="FunFam" id="3.20.180.20:FF:000023">
    <property type="entry name" value="Dynein gamma chain, flagellar outer arm"/>
    <property type="match status" value="1"/>
</dbReference>
<dbReference type="FunFam" id="1.10.287.2620:FF:000002">
    <property type="entry name" value="Dynein heavy chain 2, axonemal"/>
    <property type="match status" value="1"/>
</dbReference>
<dbReference type="FunFam" id="1.20.920.20:FF:000001">
    <property type="entry name" value="dynein heavy chain 2, axonemal"/>
    <property type="match status" value="1"/>
</dbReference>
<dbReference type="FunFam" id="1.20.1270.280:FF:000002">
    <property type="entry name" value="Dynein heavy chain 5, axonemal"/>
    <property type="match status" value="1"/>
</dbReference>
<dbReference type="FunFam" id="3.40.50.300:FF:000044">
    <property type="entry name" value="Dynein heavy chain 5, axonemal"/>
    <property type="match status" value="1"/>
</dbReference>
<dbReference type="FunFam" id="1.10.472.130:FF:000018">
    <property type="entry name" value="Dynein heavy chain, putative"/>
    <property type="match status" value="1"/>
</dbReference>
<dbReference type="FunFam" id="3.10.490.20:FF:000010">
    <property type="entry name" value="Dynein heavy chain, putative"/>
    <property type="match status" value="1"/>
</dbReference>
<dbReference type="FunFam" id="3.40.50.300:FF:001386">
    <property type="entry name" value="Dynein heavy chain, putative"/>
    <property type="match status" value="1"/>
</dbReference>
<dbReference type="FunFam" id="1.20.140.100:FF:000003">
    <property type="entry name" value="Dynein, axonemal, heavy chain 5"/>
    <property type="match status" value="1"/>
</dbReference>
<dbReference type="FunFam" id="3.40.50.300:FF:000049">
    <property type="entry name" value="Dynein, axonemal, heavy chain 5"/>
    <property type="match status" value="1"/>
</dbReference>
<dbReference type="FunFam" id="3.40.50.300:FF:000320">
    <property type="entry name" value="Dynein, axonemal, heavy chain 5"/>
    <property type="match status" value="1"/>
</dbReference>
<dbReference type="Gene3D" id="1.10.287.2620">
    <property type="match status" value="1"/>
</dbReference>
<dbReference type="Gene3D" id="1.10.472.130">
    <property type="match status" value="1"/>
</dbReference>
<dbReference type="Gene3D" id="1.10.8.1220">
    <property type="match status" value="1"/>
</dbReference>
<dbReference type="Gene3D" id="1.10.8.710">
    <property type="match status" value="1"/>
</dbReference>
<dbReference type="Gene3D" id="1.20.1270.280">
    <property type="match status" value="1"/>
</dbReference>
<dbReference type="Gene3D" id="1.20.58.1120">
    <property type="match status" value="1"/>
</dbReference>
<dbReference type="Gene3D" id="1.20.920.20">
    <property type="match status" value="1"/>
</dbReference>
<dbReference type="Gene3D" id="1.20.920.30">
    <property type="match status" value="1"/>
</dbReference>
<dbReference type="Gene3D" id="3.10.490.20">
    <property type="match status" value="1"/>
</dbReference>
<dbReference type="Gene3D" id="6.10.140.1060">
    <property type="match status" value="1"/>
</dbReference>
<dbReference type="Gene3D" id="1.20.140.100">
    <property type="entry name" value="Dynein heavy chain, N-terminal domain 2"/>
    <property type="match status" value="1"/>
</dbReference>
<dbReference type="Gene3D" id="3.20.180.20">
    <property type="entry name" value="Dynein heavy chain, N-terminal domain 2"/>
    <property type="match status" value="1"/>
</dbReference>
<dbReference type="Gene3D" id="3.40.50.300">
    <property type="entry name" value="P-loop containing nucleotide triphosphate hydrolases"/>
    <property type="match status" value="5"/>
</dbReference>
<dbReference type="Gene3D" id="1.10.8.720">
    <property type="entry name" value="Region D6 of dynein motor"/>
    <property type="match status" value="1"/>
</dbReference>
<dbReference type="InterPro" id="IPR003593">
    <property type="entry name" value="AAA+_ATPase"/>
</dbReference>
<dbReference type="InterPro" id="IPR035699">
    <property type="entry name" value="AAA_6"/>
</dbReference>
<dbReference type="InterPro" id="IPR035706">
    <property type="entry name" value="AAA_9"/>
</dbReference>
<dbReference type="InterPro" id="IPR041658">
    <property type="entry name" value="AAA_lid_11"/>
</dbReference>
<dbReference type="InterPro" id="IPR042219">
    <property type="entry name" value="AAA_lid_11_sf"/>
</dbReference>
<dbReference type="InterPro" id="IPR026983">
    <property type="entry name" value="DHC"/>
</dbReference>
<dbReference type="InterPro" id="IPR041589">
    <property type="entry name" value="DNAH3_AAA_lid_1"/>
</dbReference>
<dbReference type="InterPro" id="IPR056759">
    <property type="entry name" value="DYH2-5-8_CC"/>
</dbReference>
<dbReference type="InterPro" id="IPR042222">
    <property type="entry name" value="Dynein_2_N"/>
</dbReference>
<dbReference type="InterPro" id="IPR043157">
    <property type="entry name" value="Dynein_AAA1S"/>
</dbReference>
<dbReference type="InterPro" id="IPR041466">
    <property type="entry name" value="Dynein_AAA5_ext"/>
</dbReference>
<dbReference type="InterPro" id="IPR041228">
    <property type="entry name" value="Dynein_C"/>
</dbReference>
<dbReference type="InterPro" id="IPR043160">
    <property type="entry name" value="Dynein_C_barrel"/>
</dbReference>
<dbReference type="InterPro" id="IPR024743">
    <property type="entry name" value="Dynein_HC_stalk"/>
</dbReference>
<dbReference type="InterPro" id="IPR024317">
    <property type="entry name" value="Dynein_heavy_chain_D4_dom"/>
</dbReference>
<dbReference type="InterPro" id="IPR004273">
    <property type="entry name" value="Dynein_heavy_D6_P-loop"/>
</dbReference>
<dbReference type="InterPro" id="IPR013602">
    <property type="entry name" value="Dynein_heavy_linker"/>
</dbReference>
<dbReference type="InterPro" id="IPR013594">
    <property type="entry name" value="Dynein_heavy_tail"/>
</dbReference>
<dbReference type="InterPro" id="IPR042228">
    <property type="entry name" value="Dynein_linker_3"/>
</dbReference>
<dbReference type="InterPro" id="IPR027417">
    <property type="entry name" value="P-loop_NTPase"/>
</dbReference>
<dbReference type="PANTHER" id="PTHR46532:SF4">
    <property type="entry name" value="AAA+ ATPASE DOMAIN-CONTAINING PROTEIN"/>
    <property type="match status" value="1"/>
</dbReference>
<dbReference type="PANTHER" id="PTHR46532">
    <property type="entry name" value="MALE FERTILITY FACTOR KL5"/>
    <property type="match status" value="1"/>
</dbReference>
<dbReference type="Pfam" id="PF12774">
    <property type="entry name" value="AAA_6"/>
    <property type="match status" value="1"/>
</dbReference>
<dbReference type="Pfam" id="PF12775">
    <property type="entry name" value="AAA_7"/>
    <property type="match status" value="1"/>
</dbReference>
<dbReference type="Pfam" id="PF12780">
    <property type="entry name" value="AAA_8"/>
    <property type="match status" value="1"/>
</dbReference>
<dbReference type="Pfam" id="PF12781">
    <property type="entry name" value="AAA_9"/>
    <property type="match status" value="1"/>
</dbReference>
<dbReference type="Pfam" id="PF17857">
    <property type="entry name" value="AAA_lid_1"/>
    <property type="match status" value="1"/>
</dbReference>
<dbReference type="Pfam" id="PF18198">
    <property type="entry name" value="AAA_lid_11"/>
    <property type="match status" value="1"/>
</dbReference>
<dbReference type="Pfam" id="PF08385">
    <property type="entry name" value="DHC_N1"/>
    <property type="match status" value="1"/>
</dbReference>
<dbReference type="Pfam" id="PF08393">
    <property type="entry name" value="DHC_N2"/>
    <property type="match status" value="1"/>
</dbReference>
<dbReference type="Pfam" id="PF25007">
    <property type="entry name" value="DYH2-5-8_CC"/>
    <property type="match status" value="1"/>
</dbReference>
<dbReference type="Pfam" id="PF17852">
    <property type="entry name" value="Dynein_AAA_lid"/>
    <property type="match status" value="1"/>
</dbReference>
<dbReference type="Pfam" id="PF18199">
    <property type="entry name" value="Dynein_C"/>
    <property type="match status" value="1"/>
</dbReference>
<dbReference type="Pfam" id="PF03028">
    <property type="entry name" value="Dynein_heavy"/>
    <property type="match status" value="1"/>
</dbReference>
<dbReference type="Pfam" id="PF12777">
    <property type="entry name" value="MT"/>
    <property type="match status" value="1"/>
</dbReference>
<dbReference type="SMART" id="SM00382">
    <property type="entry name" value="AAA"/>
    <property type="match status" value="3"/>
</dbReference>
<dbReference type="SUPFAM" id="SSF52540">
    <property type="entry name" value="P-loop containing nucleoside triphosphate hydrolases"/>
    <property type="match status" value="4"/>
</dbReference>
<sequence>MALDNRHRLIVGKLAEAFGLPENVIEKTLTQDKQAVNSFFTPAGPPSLVFVYQVKEDKLKDGSVGPVDNKPTLHRIGPHERIHNSVYFTRLNPKGINEKTLEADMGSGELSVLWALENFKAIVSDLYLPIMQEQQQWGKMSTEYLEDFLSSTAKFGSMLTEAVATVSGGVEPMPDPRYIDQYGDLRPAGITQAAGDDDTLQEMEECLTEWCREAELLLNQTNKIKDGEERGPDTELEYWRTRMSNFNSITEHLKTKECKLVLGICSHAKTKAYLRWRGLDVQITDAANESKDNVKYLATLEKSMEPMYQGRVTDITESLPALMTNVRMMYTIARFYSTAEHMTRLFTKITNQLVRRCKEQIMENGKIWDQDKVTLIGNMKVSVELANVYRQQYRLAKETLAAQPKSKQFDFDEQAIFLKFDLSSKALHKLIDMFTTIHQFSSLEQHTHIEGLDTMLKSLNNIIDDVKRKPYDLLDYSRNAFDTDFLEFNVQINDLELQLQGFVNASFEHITSTEHALSLLAQFQAIMQRETLQQDLENKYMVIFQNYAKDLDAVQKLYEKNKYEPPVPRNAPPVAGNIMWARQLLRRIEAPMQLAQNKNLLAAKESKKNIKTYNKVAKALIEFETLWHQAWIKSIEQCKAGLAAPLLVQHPDTGKILVNFDKEIMQLVREAKYMQRFNIRCSSPSQMVLLQEEKFKFYHNQLTHLVREYEHVLGRGATIKPLLRPHLDDMERKIAPGFAVLTWTSLNIDGYLHRFKQGLARLEELVRKVVDLTENRVDSNLGAISSTLLVELPTDRSFTYEGFVEQNRFQKKQAELLAIRNEEVRRAIEDLYTLVRNYPRENTEDVLDEKEVSLLVRHYSKNMYNAIMQCTLNSLQAMKRRLGSKTTTGIFFMERPFFDVDVELKVPSVCMNPTLEEIQAAINQCAKKVLTISKQLPAWGMDNVATYHEMMRGDRRWVKAVLRLTGSVEGIKTQVGEYIRTFDKYDFLWKEDLQAAYDHFMRSNPTLEAFEAELKKYMAIETEVTMINGVNNIGALSLETHPLKNSLKAEAVSWKTQFAQNLHKQCSDDLKLDNYIRDTNSKFHRKIEDLEDVRNVMAVLKEVREKESEIDNLIGPIEEMYGLLMRYEVRVPKEETTMVSDLRYGWKKLKKVATEVSDNLTRLQVGFKRELIKEVKTFVVDAQMFRKDWEANAMVPGLDPQEAVDRLRKFQQMFEVRKRKWENYSSGEELFGLPVTQYPELEQTEKEIQMLDRLYSLYVAVITTIKGYGDYFWVDVVEKIDEMGEQVQQYQNQSKKLPKLRDWPAYNACRKTIDDFLEMLPLFQALTHKSMRERHWKEVMRVTGHELNLAEDHFKLQHLLDCNVLRYREDIEDLTGAAVKEEIIEVKLNQLKADWATANLALAEYKNRGPVILKPSDTSELMEKLEESQMTLGSMATNRYSAPFRDEVQAWSIKLSTVSEIIEQWLMVQSMWQYMEAVFSGGDIVKQLPQEAKRFLNIDKNFMKIVSNALETQNVINTCFGNELMKNMLPHLHEQLEMCQKSLSAYLEQKRAEFPRFTCVGPHLLEICRWAHDPPSVVPHFQSGLFDSLSNVTFDRIDKTRMTEMFSQQNEKVEFERPVDAKGNIEVWLQRLVDGMEDTVKQIIKRAVRNVAEMPLEDFVFGHPAQVSLLGIQFQWTAETQMALSSAKVDKTIMNKNMKKVDALLRDMVNITVRLDLTKNQRTNLETCITVHMHQKESTEDLVKKKIKDPTDFEWLKQVRFYWRDDKDTVIISICDVDFEYSFEYLGVKERLVITPLTDICYITLSQALGMFLGGAPAGPAGTGKTETTKDLGNTLGKYVVVFNCSDQFDYTYMGKIYKGLAQSGLWGCFDEFNRINLDVLSVCAQQVYCICRTRERKKSFQFTDGTTVSLDPRVGFFITMNPGYAGAQELPENLKALFRGVTMMVPNRQIIMKVKLAAAGYQENDILSKKFFVLYGLCEQQLSKQAHYDFGLRNILSVLRTAGASKRQSPDKSEVFLMMRTVRDMNMSKFVAEDVPLFLSLIDDLFPGLKADATRPDVNKDAEKVVLERGLQVHPTWMNKCIQLYETYLVRHGIMLVGPSGSGKSAICECLAAALTELGTKHVIWRMNPKAITAPQMFGRRDDTTGDWTDGIFAVLWRRAAKNKNQNTWIVLDGPVDAIWIENLNTVLDDNKVLTLANGDRILMSAAMKAMFEPENLNNASPATVSRAGIIYVSDVELGWEPPVKSWLQKRDPTEACWARLFSKYIDRMLEFVRISLKPVMYNEQVSIVGTVMTLLNGYLKSMKEAGTAMNDAKYERVFLYCMTWSLGGLLEMKERPLFDQELRTFAHNMPPKEEDSDTIFEFLVNTTDAEWLHWRHCVPVWTYPKNEEKPQYAQLVIPTLDSVRYGALLNLSYNVDKATLLVGGPGTAKTNTINQFISKFNAETTANKTITFSSLTTPGIFQMSIEGAVEKRQGRTFGPPGGKQMCIFVDDISMPYINEWGHQVTNEIVRQLLEQGGMYSLEKPIGDMKFITDVRYVAAMNTPGGGKNDIPNRLKRQFAIFNVPLPSVAAINGIFGKLVEGRFSRDVFCEEVVYVASKLVPLTITLWNRIQTKMLPTPAKFHYLFNMRELSKVFQGVILATRDRFNLAAGDSAVFGGNVASPEGYLLGLWIHECRRVFSDKLISYEDKNWVDKAVFDLCRDNFSSDLVKQVEEPIYFVDFLREPAVMMRPVEIVTPHPSFYYSVPGGLPEVRARVEGLQRKFNEESKVMKLELVLFTDCVTHLMRITRLLAWPGLGLLVGVGGSGKQSLSRLSAYIAGPTFYITKTYNVSNLFEHIKGLYKIAGFKGQPVYFIFTDAEVKDEGFLEYINQILMTGEVAGLLTKEDQDMIVNDIRPVMKHQAPGILDTYDNLYNFFLNRVRDNLHVVLCFSPVGAKFARRAQQFPGLINGCTIDWFCPGPKKRLTSVSGKFIDKFTMACPKEVKNQLELLMGHAHVFVTAACKEYFEKYRRYVYVTPKSYLSFLQGYKELYAKKWSFTKELAYQIEVACQKMFEPKADVNKMKAELAVKNQTAVSAKEAEALLKQISESTAIAEKEKQKVAVIVDAVTKKASEIATVKDDAERDLAAAKPALDAALEALNSIKDGDIKNLKALKKPPQIITRIFDCVLVLRMLPVTKAEYTDEKGRMVQVGNYPEAQKMMNQMSFLQDLKDFAKEQINDETVELLEPYFMSEDFTFENAQKGSGNVAGLCNWAESMAKYHNVAKVVEPKIAKLREAEAELKLATKEKNAAEERMAKVQAKLDEMQAQFDAAMAHKQALEDDAAATQRKMDSANALIGALAGEEARWTAQSKEFDVQIQRLTGDCALASAFVSYLGPFNKEFRELLLNRDFYGDCMKLNVPVTPHLQITKFLVDDSEVGEWNLQGLPTDELSIQNGIMVTRASRYPVLVDPQGQGREWIKNREEANQLKTTQLNDKLFRNHLEECLAFGRPLLIENIEEELDPLLDPVLERRLVKKGKTWVVPLADKEVDFTETFRLFCTTRLPNPHFTPELSAKVTVVDFTVTMAGLEDQLLGKLISKEKKELEDQRQQLLEEVQSYKKRIKQLEDDLLCRLSNSQGNLLDEHQELIDVLAVTKQTAQDVSEKLANASETNKRINEACEEYRPVAHRATLLYFLIAEFSVVNCMYQTSLAQFNQLYELAIDRSEKANMPSKRIHNIIEYMTYEIYLYVQRGLFERHKIIFALMLTNKVLTSAGKVKATDLDVFLKGGAALDINSVRKKPKDWIPDLVWLNIIALSAMDAFRDIPDSVFRNDGLWRQWYDQEAPEMAKVPDYEDRLNKFERMCVVKTFREDRTLIAAADYIAEALGQRFVESVPLNMEKRPGRRAMAKCPLICLLSPGPDPTKLIEDLAKKKKIKTLGVSMGQGQEVIARKHMAAASLEGHWVLLQNTHLGLGYLTEVETFLVKEENVHEDFRLWITAEPHPQFPIGLLQMGIKITNEAPVGIKAGLRASYQWVNQDMLDMVSRQEWRQLLFVMCFLHSVVQEPQFGPIGWNVPYEFNQSDLSACVQFLQNHLSEMDAKKAPQPTWETVRYMISAIQYGSRITDDFDKLLMDTFAEKYFLQPVLQPSYELFKDTRSSDGFSYRVPDSTDIETFGSYIETLPGTESPEIFGLHPNADITFRTLQVQESIVTILDTMPKGAGSGSGLSREDVVDKICEDLLSKAPPLFDKEETKEKLKKLPGGPTLPLTVHLRQEIDRLNIVTRLTTTTLKNLALAIAGTIAAERGLIDALDALFNARIPQQWLSKSWEASTLGNWFTGLLQRYDQLNKWLNLGRPKAYWMTGFFNPQGFLTAMKQEVNRKHRDKWALDDVVMSSEVTHRPKDFESLKEGAPEGVYVYGLYLDLRLDGRENRLMDSDPKKLFNPLPVLHVDGVLAKDKKRSGLYEAPKPYRVKARKGLNFITTFSVRTEDDKSKWILPGVGILCSID</sequence>
<comment type="function">
    <text>Force generating protein of eukaryotic cilia and flagella. Produces force towards the minus ends of microtubules. Dynein has ATPase activity; the force-producing power stroke is thought to occur on release of ADP.</text>
</comment>
<comment type="subunit">
    <text>Consists of at least 3 heavy chains (alpha, beta and gamma), 2 intermediate chains and 8 light chains.</text>
</comment>
<comment type="subcellular location">
    <subcellularLocation>
        <location>Cell projection</location>
        <location>Cilium</location>
        <location>Flagellum</location>
    </subcellularLocation>
    <subcellularLocation>
        <location>Cytoplasm</location>
        <location>Cytoskeleton</location>
        <location>Flagellum axoneme</location>
    </subcellularLocation>
</comment>
<comment type="domain">
    <text>Dynein heavy chains probably consist of an N-terminal stem (which binds cargo and interacts with other dynein components), and the head or motor domain. The motor contains six tandemly-linked AAA domains in the head, which form a ring. A stalk-like structure (formed by two of the coiled coil domains) protrudes between AAA 4 and AAA 5 and terminates in a microtubule-binding site. A seventh domain may also contribute to this ring; it is not clear whether the N-terminus or the C-terminus forms this extra domain. There are four well-conserved and two non-conserved ATPase sites, one per AAA domain. Probably only one of these (within AAA 1) actually hydrolyzes ATP, the others may serve a regulatory function.</text>
</comment>
<comment type="similarity">
    <text evidence="3">Belongs to the dynein heavy chain family.</text>
</comment>
<keyword id="KW-0002">3D-structure</keyword>
<keyword id="KW-0067">ATP-binding</keyword>
<keyword id="KW-0966">Cell projection</keyword>
<keyword id="KW-0969">Cilium</keyword>
<keyword id="KW-0970">Cilium biogenesis/degradation</keyword>
<keyword id="KW-0175">Coiled coil</keyword>
<keyword id="KW-0963">Cytoplasm</keyword>
<keyword id="KW-0206">Cytoskeleton</keyword>
<keyword id="KW-0903">Direct protein sequencing</keyword>
<keyword id="KW-0243">Dynein</keyword>
<keyword id="KW-0282">Flagellum</keyword>
<keyword id="KW-0493">Microtubule</keyword>
<keyword id="KW-0505">Motor protein</keyword>
<keyword id="KW-0547">Nucleotide-binding</keyword>
<keyword id="KW-0677">Repeat</keyword>
<name>DYHG_CHLRE</name>
<reference key="1">
    <citation type="journal article" date="1994" name="J. Cell Sci.">
        <title>Molecular analysis of the gamma heavy chain of Chlamydomonas flagellar outer-arm dynein.</title>
        <authorList>
            <person name="Wilkerson C.G."/>
            <person name="King S.M."/>
            <person name="Witman G.B."/>
        </authorList>
    </citation>
    <scope>NUCLEOTIDE SEQUENCE [MRNA]</scope>
    <scope>PARTIAL PROTEIN SEQUENCE</scope>
    <source>
        <strain>1132D</strain>
    </source>
</reference>
<organism>
    <name type="scientific">Chlamydomonas reinhardtii</name>
    <name type="common">Chlamydomonas smithii</name>
    <dbReference type="NCBI Taxonomy" id="3055"/>
    <lineage>
        <taxon>Eukaryota</taxon>
        <taxon>Viridiplantae</taxon>
        <taxon>Chlorophyta</taxon>
        <taxon>core chlorophytes</taxon>
        <taxon>Chlorophyceae</taxon>
        <taxon>CS clade</taxon>
        <taxon>Chlamydomonadales</taxon>
        <taxon>Chlamydomonadaceae</taxon>
        <taxon>Chlamydomonas</taxon>
    </lineage>
</organism>
<protein>
    <recommendedName>
        <fullName>Dynein gamma chain, flagellar outer arm</fullName>
    </recommendedName>
</protein>
<feature type="chain" id="PRO_0000114650" description="Dynein gamma chain, flagellar outer arm">
    <location>
        <begin position="1"/>
        <end position="4485"/>
    </location>
</feature>
<feature type="region of interest" description="Stem" evidence="1">
    <location>
        <begin position="1"/>
        <end position="1780"/>
    </location>
</feature>
<feature type="region of interest" description="AAA 1" evidence="1">
    <location>
        <begin position="1781"/>
        <end position="2002"/>
    </location>
</feature>
<feature type="region of interest" description="AAA 2" evidence="1">
    <location>
        <begin position="2061"/>
        <end position="2279"/>
    </location>
</feature>
<feature type="region of interest" description="AAA 3" evidence="1">
    <location>
        <begin position="2384"/>
        <end position="2638"/>
    </location>
</feature>
<feature type="region of interest" description="AAA 4" evidence="1">
    <location>
        <begin position="2763"/>
        <end position="3013"/>
    </location>
</feature>
<feature type="region of interest" description="Stalk" evidence="1">
    <location>
        <begin position="3077"/>
        <end position="3343"/>
    </location>
</feature>
<feature type="region of interest" description="AAA 5" evidence="1">
    <location>
        <begin position="3412"/>
        <end position="3643"/>
    </location>
</feature>
<feature type="region of interest" description="AAA 6" evidence="1">
    <location>
        <begin position="3857"/>
        <end position="4071"/>
    </location>
</feature>
<feature type="coiled-coil region" evidence="2">
    <location>
        <begin position="449"/>
        <end position="469"/>
    </location>
</feature>
<feature type="coiled-coil region" evidence="2">
    <location>
        <begin position="804"/>
        <end position="838"/>
    </location>
</feature>
<feature type="coiled-coil region" evidence="2">
    <location>
        <begin position="1093"/>
        <end position="1114"/>
    </location>
</feature>
<feature type="coiled-coil region" evidence="2">
    <location>
        <begin position="1275"/>
        <end position="1297"/>
    </location>
</feature>
<feature type="coiled-coil region" evidence="2">
    <location>
        <begin position="1699"/>
        <end position="1727"/>
    </location>
</feature>
<feature type="coiled-coil region" evidence="2">
    <location>
        <begin position="3077"/>
        <end position="3099"/>
    </location>
</feature>
<feature type="coiled-coil region" evidence="2">
    <location>
        <begin position="3196"/>
        <end position="3227"/>
    </location>
</feature>
<feature type="coiled-coil region" evidence="2">
    <location>
        <begin position="3265"/>
        <end position="3343"/>
    </location>
</feature>
<feature type="coiled-coil region" evidence="2">
    <location>
        <begin position="3569"/>
        <end position="3663"/>
    </location>
</feature>
<feature type="binding site" evidence="2">
    <location>
        <begin position="1819"/>
        <end position="1826"/>
    </location>
    <ligand>
        <name>ATP</name>
        <dbReference type="ChEBI" id="CHEBI:30616"/>
    </ligand>
</feature>
<feature type="binding site" evidence="2">
    <location>
        <begin position="2099"/>
        <end position="2106"/>
    </location>
    <ligand>
        <name>ATP</name>
        <dbReference type="ChEBI" id="CHEBI:30616"/>
    </ligand>
</feature>
<feature type="binding site" evidence="2">
    <location>
        <begin position="2425"/>
        <end position="2432"/>
    </location>
    <ligand>
        <name>ATP</name>
        <dbReference type="ChEBI" id="CHEBI:30616"/>
    </ligand>
</feature>
<feature type="binding site" evidence="2">
    <location>
        <begin position="2802"/>
        <end position="2809"/>
    </location>
    <ligand>
        <name>ATP</name>
        <dbReference type="ChEBI" id="CHEBI:30616"/>
    </ligand>
</feature>
<feature type="helix" evidence="4">
    <location>
        <begin position="3130"/>
        <end position="3141"/>
    </location>
</feature>
<feature type="helix" evidence="4">
    <location>
        <begin position="3145"/>
        <end position="3153"/>
    </location>
</feature>
<feature type="helix" evidence="4">
    <location>
        <begin position="3159"/>
        <end position="3171"/>
    </location>
</feature>
<feature type="strand" evidence="4">
    <location>
        <begin position="3181"/>
        <end position="3184"/>
    </location>
</feature>
<feature type="strand" evidence="4">
    <location>
        <begin position="3187"/>
        <end position="3190"/>
    </location>
</feature>
<feature type="helix" evidence="4">
    <location>
        <begin position="3194"/>
        <end position="3201"/>
    </location>
</feature>
<feature type="helix" evidence="4">
    <location>
        <begin position="3206"/>
        <end position="3211"/>
    </location>
</feature>
<feature type="helix" evidence="4">
    <location>
        <begin position="3215"/>
        <end position="3217"/>
    </location>
</feature>
<feature type="helix" evidence="4">
    <location>
        <begin position="3220"/>
        <end position="3230"/>
    </location>
</feature>
<feature type="helix" evidence="4">
    <location>
        <begin position="3237"/>
        <end position="3244"/>
    </location>
</feature>
<feature type="helix" evidence="4">
    <location>
        <begin position="3245"/>
        <end position="3248"/>
    </location>
</feature>
<feature type="helix" evidence="4">
    <location>
        <begin position="3249"/>
        <end position="3264"/>
    </location>
</feature>
<gene>
    <name type="primary">ODA2</name>
    <name type="synonym">ODA-2</name>
</gene>
<accession>Q39575</accession>
<proteinExistence type="evidence at protein level"/>
<evidence type="ECO:0000250" key="1"/>
<evidence type="ECO:0000255" key="2"/>
<evidence type="ECO:0000305" key="3"/>
<evidence type="ECO:0007829" key="4">
    <source>
        <dbReference type="PDB" id="6L4P"/>
    </source>
</evidence>